<protein>
    <recommendedName>
        <fullName evidence="5">Fugralins biosynthesis cluster protein 2</fullName>
    </recommendedName>
</protein>
<proteinExistence type="inferred from homology"/>
<feature type="chain" id="PRO_0000460588" description="Fugralins biosynthesis cluster protein 2">
    <location>
        <begin position="1"/>
        <end position="402"/>
    </location>
</feature>
<feature type="transmembrane region" description="Helical" evidence="1">
    <location>
        <begin position="28"/>
        <end position="48"/>
    </location>
</feature>
<feature type="transmembrane region" description="Helical" evidence="1">
    <location>
        <begin position="109"/>
        <end position="129"/>
    </location>
</feature>
<feature type="transmembrane region" description="Helical" evidence="1">
    <location>
        <begin position="145"/>
        <end position="165"/>
    </location>
</feature>
<feature type="transmembrane region" description="Helical" evidence="1">
    <location>
        <begin position="232"/>
        <end position="252"/>
    </location>
</feature>
<feature type="transmembrane region" description="Helical" evidence="1">
    <location>
        <begin position="264"/>
        <end position="284"/>
    </location>
</feature>
<feature type="region of interest" description="Disordered" evidence="3">
    <location>
        <begin position="312"/>
        <end position="335"/>
    </location>
</feature>
<feature type="region of interest" description="Disordered" evidence="3">
    <location>
        <begin position="378"/>
        <end position="402"/>
    </location>
</feature>
<feature type="compositionally biased region" description="Polar residues" evidence="3">
    <location>
        <begin position="324"/>
        <end position="334"/>
    </location>
</feature>
<feature type="glycosylation site" description="N-linked (GlcNAc...) asparagine" evidence="2">
    <location>
        <position position="381"/>
    </location>
</feature>
<comment type="function">
    <text evidence="4 7">Part of the gene cluster that mediates the biosynthesis of the tetraketides fugralins such as linear fugralin A and cyclic fugralin B, volatile compounds that play a role in the asexual reproductive cycle but are not involved in pathogenicity (PubMed:38025899). One of the key features of fugralins is the presence of a double methyl group, which is only rarely encountered in fungal secondary metabolites. As the fugralins cluster does not contain an independent methyltransferase, the PKS FGR1 is probably responsible for adding two methyl groups to the same carbon atom (Probable). Fugralin B is similar to fugralin A except for a cyclization between the carboxylic acid C-8 and the alcohol on C-4 resulting in a six membered lactone ring, probably catalyzed by the cyclase FGR4 (Probable). The exact role of the individual cluster genes remains unknown and further work is needed to unravel the biosynthetic pathway (Probable).</text>
</comment>
<comment type="pathway">
    <text evidence="7">Secondary metabolite biosynthesis.</text>
</comment>
<comment type="subcellular location">
    <subcellularLocation>
        <location evidence="1">Membrane</location>
        <topology evidence="1">Multi-pass membrane protein</topology>
    </subcellularLocation>
</comment>
<comment type="similarity">
    <text evidence="6">Belongs to the SAT4 family.</text>
</comment>
<evidence type="ECO:0000255" key="1"/>
<evidence type="ECO:0000255" key="2">
    <source>
        <dbReference type="PROSITE-ProRule" id="PRU00498"/>
    </source>
</evidence>
<evidence type="ECO:0000256" key="3">
    <source>
        <dbReference type="SAM" id="MobiDB-lite"/>
    </source>
</evidence>
<evidence type="ECO:0000269" key="4">
    <source>
    </source>
</evidence>
<evidence type="ECO:0000303" key="5">
    <source>
    </source>
</evidence>
<evidence type="ECO:0000305" key="6"/>
<evidence type="ECO:0000305" key="7">
    <source>
    </source>
</evidence>
<gene>
    <name evidence="5" type="primary">FGR2</name>
    <name type="ORF">FG04693</name>
    <name type="ORF">FGRAMPH1_01T16083</name>
</gene>
<keyword id="KW-0325">Glycoprotein</keyword>
<keyword id="KW-0472">Membrane</keyword>
<keyword id="KW-1185">Reference proteome</keyword>
<keyword id="KW-0812">Transmembrane</keyword>
<keyword id="KW-1133">Transmembrane helix</keyword>
<sequence>MATIDLDGPALAPPKGEVSNLDDPPNQNCLAYTVLILCAVITTICFLLRAYGRVYLLKKFQTEEILTTLAYGNYWGAAYATFKMVDTPGYFVHQWNVRLKDVIPTNYWILIFGVCYSFVLPFLKIAILVEWCRLFVPKGTRTKSIFWWGCMVIGFVQATSNTAIVVALNMQCNPHEAIWDFRIPGAKCWDLHKLQVASATIHLCCDIAIFLLPQQVIWKLKMSWKKRMGVSVIFGLGLLACVSAAVRLAVTVKYGKAADALYALAPLVFWATAEMTCGFFIVCVPCIPKILKETGVIRNIKRAFGMSTAPTNPNTADRYAKSGTKGSQLSSTGPKSYYKLDEDGVPLGTLKGSESTEYLRGNVNNGQGITRTTQIKITQDNRSTSDSEGHAAFPASQKPWGV</sequence>
<reference key="1">
    <citation type="journal article" date="2007" name="Science">
        <title>The Fusarium graminearum genome reveals a link between localized polymorphism and pathogen specialization.</title>
        <authorList>
            <person name="Cuomo C.A."/>
            <person name="Gueldener U."/>
            <person name="Xu J.-R."/>
            <person name="Trail F."/>
            <person name="Turgeon B.G."/>
            <person name="Di Pietro A."/>
            <person name="Walton J.D."/>
            <person name="Ma L.-J."/>
            <person name="Baker S.E."/>
            <person name="Rep M."/>
            <person name="Adam G."/>
            <person name="Antoniw J."/>
            <person name="Baldwin T."/>
            <person name="Calvo S.E."/>
            <person name="Chang Y.-L."/>
            <person name="DeCaprio D."/>
            <person name="Gale L.R."/>
            <person name="Gnerre S."/>
            <person name="Goswami R.S."/>
            <person name="Hammond-Kosack K."/>
            <person name="Harris L.J."/>
            <person name="Hilburn K."/>
            <person name="Kennell J.C."/>
            <person name="Kroken S."/>
            <person name="Magnuson J.K."/>
            <person name="Mannhaupt G."/>
            <person name="Mauceli E.W."/>
            <person name="Mewes H.-W."/>
            <person name="Mitterbauer R."/>
            <person name="Muehlbauer G."/>
            <person name="Muensterkoetter M."/>
            <person name="Nelson D."/>
            <person name="O'Donnell K."/>
            <person name="Ouellet T."/>
            <person name="Qi W."/>
            <person name="Quesneville H."/>
            <person name="Roncero M.I.G."/>
            <person name="Seong K.-Y."/>
            <person name="Tetko I.V."/>
            <person name="Urban M."/>
            <person name="Waalwijk C."/>
            <person name="Ward T.J."/>
            <person name="Yao J."/>
            <person name="Birren B.W."/>
            <person name="Kistler H.C."/>
        </authorList>
    </citation>
    <scope>NUCLEOTIDE SEQUENCE [LARGE SCALE GENOMIC DNA]</scope>
    <source>
        <strain>ATCC MYA-4620 / CBS 123657 / FGSC 9075 / NRRL 31084 / PH-1</strain>
    </source>
</reference>
<reference key="2">
    <citation type="journal article" date="2010" name="Nature">
        <title>Comparative genomics reveals mobile pathogenicity chromosomes in Fusarium.</title>
        <authorList>
            <person name="Ma L.-J."/>
            <person name="van der Does H.C."/>
            <person name="Borkovich K.A."/>
            <person name="Coleman J.J."/>
            <person name="Daboussi M.-J."/>
            <person name="Di Pietro A."/>
            <person name="Dufresne M."/>
            <person name="Freitag M."/>
            <person name="Grabherr M."/>
            <person name="Henrissat B."/>
            <person name="Houterman P.M."/>
            <person name="Kang S."/>
            <person name="Shim W.-B."/>
            <person name="Woloshuk C."/>
            <person name="Xie X."/>
            <person name="Xu J.-R."/>
            <person name="Antoniw J."/>
            <person name="Baker S.E."/>
            <person name="Bluhm B.H."/>
            <person name="Breakspear A."/>
            <person name="Brown D.W."/>
            <person name="Butchko R.A.E."/>
            <person name="Chapman S."/>
            <person name="Coulson R."/>
            <person name="Coutinho P.M."/>
            <person name="Danchin E.G.J."/>
            <person name="Diener A."/>
            <person name="Gale L.R."/>
            <person name="Gardiner D.M."/>
            <person name="Goff S."/>
            <person name="Hammond-Kosack K.E."/>
            <person name="Hilburn K."/>
            <person name="Hua-Van A."/>
            <person name="Jonkers W."/>
            <person name="Kazan K."/>
            <person name="Kodira C.D."/>
            <person name="Koehrsen M."/>
            <person name="Kumar L."/>
            <person name="Lee Y.-H."/>
            <person name="Li L."/>
            <person name="Manners J.M."/>
            <person name="Miranda-Saavedra D."/>
            <person name="Mukherjee M."/>
            <person name="Park G."/>
            <person name="Park J."/>
            <person name="Park S.-Y."/>
            <person name="Proctor R.H."/>
            <person name="Regev A."/>
            <person name="Ruiz-Roldan M.C."/>
            <person name="Sain D."/>
            <person name="Sakthikumar S."/>
            <person name="Sykes S."/>
            <person name="Schwartz D.C."/>
            <person name="Turgeon B.G."/>
            <person name="Wapinski I."/>
            <person name="Yoder O."/>
            <person name="Young S."/>
            <person name="Zeng Q."/>
            <person name="Zhou S."/>
            <person name="Galagan J."/>
            <person name="Cuomo C.A."/>
            <person name="Kistler H.C."/>
            <person name="Rep M."/>
        </authorList>
    </citation>
    <scope>GENOME REANNOTATION</scope>
    <source>
        <strain>ATCC MYA-4620 / CBS 123657 / FGSC 9075 / NRRL 31084 / PH-1</strain>
    </source>
</reference>
<reference key="3">
    <citation type="journal article" date="2015" name="BMC Genomics">
        <title>The completed genome sequence of the pathogenic ascomycete fungus Fusarium graminearum.</title>
        <authorList>
            <person name="King R."/>
            <person name="Urban M."/>
            <person name="Hammond-Kosack M.C.U."/>
            <person name="Hassani-Pak K."/>
            <person name="Hammond-Kosack K.E."/>
        </authorList>
    </citation>
    <scope>NUCLEOTIDE SEQUENCE [LARGE SCALE GENOMIC DNA]</scope>
    <source>
        <strain>ATCC MYA-4620 / CBS 123657 / FGSC 9075 / NRRL 31084 / PH-1</strain>
    </source>
</reference>
<reference key="4">
    <citation type="journal article" date="2023" name="Front. Fungal Biol.">
        <title>Filling out the gaps - identification of fugralins as products of the PKS2 cluster in Fusarium graminearum.</title>
        <authorList>
            <person name="Severinsen M.M."/>
            <person name="Westphal K.R."/>
            <person name="Terp M."/>
            <person name="Soerensen T."/>
            <person name="Olsen A."/>
            <person name="Bachleitner S."/>
            <person name="Studt-Reinhold L."/>
            <person name="Wimmer R."/>
            <person name="Sondergaard T.E."/>
            <person name="Soerensen J.L."/>
        </authorList>
    </citation>
    <scope>FUNCTION</scope>
    <scope>PATHWAY</scope>
</reference>
<dbReference type="EMBL" id="HG970334">
    <property type="protein sequence ID" value="CEF86402.1"/>
    <property type="molecule type" value="Genomic_DNA"/>
</dbReference>
<dbReference type="RefSeq" id="XP_011323125.1">
    <property type="nucleotide sequence ID" value="XM_011324823.1"/>
</dbReference>
<dbReference type="KEGG" id="fgr:FGSG_04693"/>
<dbReference type="VEuPathDB" id="FungiDB:FGRAMPH1_01G16083"/>
<dbReference type="eggNOG" id="ENOG502SKND">
    <property type="taxonomic scope" value="Eukaryota"/>
</dbReference>
<dbReference type="HOGENOM" id="CLU_028200_12_4_1"/>
<dbReference type="InParanoid" id="I1RLA6"/>
<dbReference type="OrthoDB" id="129679at110618"/>
<dbReference type="PHI-base" id="PHI:5841"/>
<dbReference type="Proteomes" id="UP000070720">
    <property type="component" value="Chromosome 3"/>
</dbReference>
<dbReference type="GO" id="GO:0016020">
    <property type="term" value="C:membrane"/>
    <property type="evidence" value="ECO:0007669"/>
    <property type="project" value="UniProtKB-SubCell"/>
</dbReference>
<dbReference type="InterPro" id="IPR049326">
    <property type="entry name" value="Rhodopsin_dom_fungi"/>
</dbReference>
<dbReference type="InterPro" id="IPR052337">
    <property type="entry name" value="SAT4-like"/>
</dbReference>
<dbReference type="PANTHER" id="PTHR33048:SF158">
    <property type="entry name" value="MEMBRANE PROTEIN PTH11-LIKE, PUTATIVE-RELATED"/>
    <property type="match status" value="1"/>
</dbReference>
<dbReference type="PANTHER" id="PTHR33048">
    <property type="entry name" value="PTH11-LIKE INTEGRAL MEMBRANE PROTEIN (AFU_ORTHOLOGUE AFUA_5G11245)"/>
    <property type="match status" value="1"/>
</dbReference>
<dbReference type="Pfam" id="PF20684">
    <property type="entry name" value="Fung_rhodopsin"/>
    <property type="match status" value="1"/>
</dbReference>
<organism>
    <name type="scientific">Gibberella zeae (strain ATCC MYA-4620 / CBS 123657 / FGSC 9075 / NRRL 31084 / PH-1)</name>
    <name type="common">Wheat head blight fungus</name>
    <name type="synonym">Fusarium graminearum</name>
    <dbReference type="NCBI Taxonomy" id="229533"/>
    <lineage>
        <taxon>Eukaryota</taxon>
        <taxon>Fungi</taxon>
        <taxon>Dikarya</taxon>
        <taxon>Ascomycota</taxon>
        <taxon>Pezizomycotina</taxon>
        <taxon>Sordariomycetes</taxon>
        <taxon>Hypocreomycetidae</taxon>
        <taxon>Hypocreales</taxon>
        <taxon>Nectriaceae</taxon>
        <taxon>Fusarium</taxon>
    </lineage>
</organism>
<name>FGR2_GIBZE</name>
<accession>I1RLA6</accession>